<accession>B3RHK4</accession>
<dbReference type="EMBL" id="DS981519">
    <property type="protein sequence ID" value="EDV08648.1"/>
    <property type="status" value="ALT_SEQ"/>
    <property type="molecule type" value="Genomic_DNA"/>
</dbReference>
<dbReference type="SMR" id="B3RHK4"/>
<dbReference type="HOGENOM" id="CLU_094693_1_0_1"/>
<dbReference type="OrthoDB" id="32221at4893"/>
<dbReference type="Proteomes" id="UP000008335">
    <property type="component" value="Unassembled WGS sequence"/>
</dbReference>
<dbReference type="GO" id="GO:0005634">
    <property type="term" value="C:nucleus"/>
    <property type="evidence" value="ECO:0007669"/>
    <property type="project" value="UniProtKB-SubCell"/>
</dbReference>
<dbReference type="GO" id="GO:0051321">
    <property type="term" value="P:meiotic cell cycle"/>
    <property type="evidence" value="ECO:0007669"/>
    <property type="project" value="UniProtKB-KW"/>
</dbReference>
<dbReference type="InterPro" id="IPR048920">
    <property type="entry name" value="REC102"/>
</dbReference>
<dbReference type="Pfam" id="PF21736">
    <property type="entry name" value="REC102"/>
    <property type="match status" value="1"/>
</dbReference>
<feature type="chain" id="PRO_0000377624" description="Meiotic recombination protein REC102">
    <location>
        <begin position="1"/>
        <end position="264"/>
    </location>
</feature>
<feature type="region of interest" description="Leucine-zipper">
    <location>
        <begin position="200"/>
        <end position="221"/>
    </location>
</feature>
<evidence type="ECO:0000250" key="1">
    <source>
        <dbReference type="UniProtKB" id="Q02721"/>
    </source>
</evidence>
<evidence type="ECO:0000305" key="2"/>
<sequence>MARDITFLTVFLESCGAVNNDEAGKLLSAWTSTVRIEGPEPTDSNSLYIPLLPPGMLKIKLNFKMNDRLVTEEQELFTKLREIVGSSIRFWEEQLFYQVQDVSTIENHVILSLKCTILTDAQISTFISKPRELHTHAKGYPEIYYLSELSTTVNFFSKEGNYVEISHVIPHFNEYFSSLIVSQLEFEYPMVFSMISRLRLKWQQSSLAPISYALTSNSVLLPIMLNMIAQDKSSTTAYQILCRRRGPPIQNFQIFSIPAVTYNK</sequence>
<name>TO6BL_YEAS1</name>
<comment type="function">
    <text evidence="1">Required for formation of the SPO11-mediated double-strand breaks (DSBs) that initiate meiotic recombination. May mediate the interaction between SPO11 subunits during meiosis. Also needed for homolog chromosome pairing, synaptonemal complex formation, and for the proper timing of the first meiotic division. Not required for mitosis and mitotic DNA repair mechanisms.</text>
</comment>
<comment type="subunit">
    <text evidence="1">Interacts with REC104; seems to form a functional unit with REC104. REC102-REC104 interacts with SKI8-SPO11 and this interaction is required for proper subcellular location of the proteins during the initiation of recombination. Interacts with MEI4, REC114 and SPO11.</text>
</comment>
<comment type="subcellular location">
    <subcellularLocation>
        <location evidence="1">Nucleus</location>
    </subcellularLocation>
    <text evidence="1">Associates with chromatin during prophase. Recruitment to chromatin depends on REC104, SPO11 and SKI8.</text>
</comment>
<comment type="miscellaneous">
    <text evidence="1">Despite weak sequence similarities, may correspond to the subunit B of a SPO11-containing topoisomerase 6 complex specifically required for meiotic recombination. Retains some of the structural features of the ancestral archaeal Top6B subunit (AC O05207).</text>
</comment>
<comment type="similarity">
    <text evidence="2">Belongs to the TOP6B-like family.</text>
</comment>
<comment type="sequence caution" evidence="2">
    <conflict type="erroneous gene model prediction">
        <sequence resource="EMBL-CDS" id="EDV08648"/>
    </conflict>
</comment>
<organism>
    <name type="scientific">Saccharomyces cerevisiae (strain RM11-1a)</name>
    <name type="common">Baker's yeast</name>
    <dbReference type="NCBI Taxonomy" id="285006"/>
    <lineage>
        <taxon>Eukaryota</taxon>
        <taxon>Fungi</taxon>
        <taxon>Dikarya</taxon>
        <taxon>Ascomycota</taxon>
        <taxon>Saccharomycotina</taxon>
        <taxon>Saccharomycetes</taxon>
        <taxon>Saccharomycetales</taxon>
        <taxon>Saccharomycetaceae</taxon>
        <taxon>Saccharomyces</taxon>
    </lineage>
</organism>
<gene>
    <name type="primary">REC102</name>
    <name type="ORF">SCRG_04276</name>
</gene>
<protein>
    <recommendedName>
        <fullName>Meiotic recombination protein REC102</fullName>
    </recommendedName>
</protein>
<proteinExistence type="inferred from homology"/>
<keyword id="KW-0469">Meiosis</keyword>
<keyword id="KW-0539">Nucleus</keyword>
<reference key="1">
    <citation type="submission" date="2005-03" db="EMBL/GenBank/DDBJ databases">
        <title>Annotation of the Saccharomyces cerevisiae RM11-1a genome.</title>
        <authorList>
            <consortium name="The Broad Institute Genome Sequencing Platform"/>
            <person name="Birren B.W."/>
            <person name="Lander E.S."/>
            <person name="Galagan J.E."/>
            <person name="Nusbaum C."/>
            <person name="Devon K."/>
            <person name="Cuomo C."/>
            <person name="Jaffe D.B."/>
            <person name="Butler J."/>
            <person name="Alvarez P."/>
            <person name="Gnerre S."/>
            <person name="Grabherr M."/>
            <person name="Kleber M."/>
            <person name="Mauceli E.W."/>
            <person name="Brockman W."/>
            <person name="MacCallum I.A."/>
            <person name="Rounsley S."/>
            <person name="Young S.K."/>
            <person name="LaButti K."/>
            <person name="Pushparaj V."/>
            <person name="DeCaprio D."/>
            <person name="Crawford M."/>
            <person name="Koehrsen M."/>
            <person name="Engels R."/>
            <person name="Montgomery P."/>
            <person name="Pearson M."/>
            <person name="Howarth C."/>
            <person name="Larson L."/>
            <person name="Luoma S."/>
            <person name="White J."/>
            <person name="O'Leary S."/>
            <person name="Kodira C.D."/>
            <person name="Zeng Q."/>
            <person name="Yandava C."/>
            <person name="Alvarado L."/>
            <person name="Pratt S."/>
            <person name="Kruglyak L."/>
        </authorList>
    </citation>
    <scope>NUCLEOTIDE SEQUENCE [LARGE SCALE GENOMIC DNA]</scope>
    <source>
        <strain>RM11-1a</strain>
    </source>
</reference>